<dbReference type="EMBL" id="M63603">
    <property type="protein sequence ID" value="AAA60083.1"/>
    <property type="molecule type" value="mRNA"/>
</dbReference>
<dbReference type="EMBL" id="M60411">
    <property type="protein sequence ID" value="AAA60109.1"/>
    <property type="molecule type" value="mRNA"/>
</dbReference>
<dbReference type="EMBL" id="AF177764">
    <property type="protein sequence ID" value="AAD55950.1"/>
    <property type="molecule type" value="Genomic_DNA"/>
</dbReference>
<dbReference type="EMBL" id="BC005269">
    <property type="protein sequence ID" value="AAH05269.1"/>
    <property type="molecule type" value="mRNA"/>
</dbReference>
<dbReference type="CCDS" id="CCDS5120.1"/>
<dbReference type="PIR" id="A40424">
    <property type="entry name" value="A40424"/>
</dbReference>
<dbReference type="RefSeq" id="NP_002658.1">
    <property type="nucleotide sequence ID" value="NM_002667.5"/>
</dbReference>
<dbReference type="PDB" id="1PLP">
    <property type="method" value="NMR"/>
    <property type="chains" value="A=1-24"/>
</dbReference>
<dbReference type="PDB" id="1ZLL">
    <property type="method" value="NMR"/>
    <property type="chains" value="A/B/C/D/E=1-52"/>
</dbReference>
<dbReference type="PDB" id="2HYN">
    <property type="method" value="NMR"/>
    <property type="chains" value="A/B/C/D/E=1-52"/>
</dbReference>
<dbReference type="PDB" id="6Y40">
    <property type="method" value="X-ray"/>
    <property type="resolution" value="1.75 A"/>
    <property type="chains" value="P=6-21"/>
</dbReference>
<dbReference type="PDB" id="7E0Z">
    <property type="method" value="X-ray"/>
    <property type="resolution" value="2.16 A"/>
    <property type="chains" value="B=8-19"/>
</dbReference>
<dbReference type="PDB" id="7E11">
    <property type="method" value="X-ray"/>
    <property type="resolution" value="3.43 A"/>
    <property type="chains" value="B=8-19"/>
</dbReference>
<dbReference type="PDB" id="7E12">
    <property type="method" value="X-ray"/>
    <property type="resolution" value="2.80 A"/>
    <property type="chains" value="B=8-19"/>
</dbReference>
<dbReference type="PDBsum" id="1PLP"/>
<dbReference type="PDBsum" id="1ZLL"/>
<dbReference type="PDBsum" id="2HYN"/>
<dbReference type="PDBsum" id="6Y40"/>
<dbReference type="PDBsum" id="7E0Z"/>
<dbReference type="PDBsum" id="7E11"/>
<dbReference type="PDBsum" id="7E12"/>
<dbReference type="SMR" id="P26678"/>
<dbReference type="BioGRID" id="111365">
    <property type="interactions" value="72"/>
</dbReference>
<dbReference type="ComplexPortal" id="CPX-51">
    <property type="entry name" value="Cardiac phospholamban complex"/>
</dbReference>
<dbReference type="CORUM" id="P26678"/>
<dbReference type="DIP" id="DIP-33582N"/>
<dbReference type="ELM" id="P26678"/>
<dbReference type="FunCoup" id="P26678">
    <property type="interactions" value="633"/>
</dbReference>
<dbReference type="IntAct" id="P26678">
    <property type="interactions" value="59"/>
</dbReference>
<dbReference type="MINT" id="P26678"/>
<dbReference type="STRING" id="9606.ENSP00000350132"/>
<dbReference type="TCDB" id="1.A.50.1.1">
    <property type="family name" value="the phospholamban (ca(2+)-channel and ca(2+)-atpase regulator) (plb) family"/>
</dbReference>
<dbReference type="GlyGen" id="P26678">
    <property type="glycosylation" value="2 sites"/>
</dbReference>
<dbReference type="iPTMnet" id="P26678"/>
<dbReference type="PhosphoSitePlus" id="P26678"/>
<dbReference type="SwissPalm" id="P26678"/>
<dbReference type="BioMuta" id="PLN"/>
<dbReference type="DMDM" id="130774"/>
<dbReference type="jPOST" id="P26678"/>
<dbReference type="MassIVE" id="P26678"/>
<dbReference type="PaxDb" id="9606-ENSP00000350132"/>
<dbReference type="PeptideAtlas" id="P26678"/>
<dbReference type="ProteomicsDB" id="54361"/>
<dbReference type="TopDownProteomics" id="P26678"/>
<dbReference type="ABCD" id="P26678">
    <property type="antibodies" value="2 sequenced antibodies"/>
</dbReference>
<dbReference type="Antibodypedia" id="3353">
    <property type="antibodies" value="502 antibodies from 38 providers"/>
</dbReference>
<dbReference type="DNASU" id="5350"/>
<dbReference type="Ensembl" id="ENST00000357525.6">
    <property type="protein sequence ID" value="ENSP00000350132.5"/>
    <property type="gene ID" value="ENSG00000198523.6"/>
</dbReference>
<dbReference type="GeneID" id="5350"/>
<dbReference type="KEGG" id="hsa:5350"/>
<dbReference type="MANE-Select" id="ENST00000357525.6">
    <property type="protein sequence ID" value="ENSP00000350132.5"/>
    <property type="RefSeq nucleotide sequence ID" value="NM_002667.5"/>
    <property type="RefSeq protein sequence ID" value="NP_002658.1"/>
</dbReference>
<dbReference type="AGR" id="HGNC:9080"/>
<dbReference type="CTD" id="5350"/>
<dbReference type="DisGeNET" id="5350"/>
<dbReference type="GeneCards" id="PLN"/>
<dbReference type="GeneReviews" id="PLN"/>
<dbReference type="HGNC" id="HGNC:9080">
    <property type="gene designation" value="PLN"/>
</dbReference>
<dbReference type="HPA" id="ENSG00000198523">
    <property type="expression patterns" value="Group enriched (heart muscle, skeletal muscle)"/>
</dbReference>
<dbReference type="MalaCards" id="PLN"/>
<dbReference type="MIM" id="172405">
    <property type="type" value="gene"/>
</dbReference>
<dbReference type="MIM" id="609909">
    <property type="type" value="phenotype"/>
</dbReference>
<dbReference type="MIM" id="613874">
    <property type="type" value="phenotype"/>
</dbReference>
<dbReference type="neXtProt" id="NX_P26678"/>
<dbReference type="OpenTargets" id="ENSG00000198523"/>
<dbReference type="Orphanet" id="154">
    <property type="disease" value="Familial isolated dilated cardiomyopathy"/>
</dbReference>
<dbReference type="Orphanet" id="293910">
    <property type="disease" value="Inherited isolated arrhythmogenic cardiomyopathy, dominant-right variant"/>
</dbReference>
<dbReference type="PharmGKB" id="PA272"/>
<dbReference type="VEuPathDB" id="HostDB:ENSG00000198523"/>
<dbReference type="eggNOG" id="ENOG502S97F">
    <property type="taxonomic scope" value="Eukaryota"/>
</dbReference>
<dbReference type="GeneTree" id="ENSGT00390000002403"/>
<dbReference type="HOGENOM" id="CLU_214576_0_0_1"/>
<dbReference type="InParanoid" id="P26678"/>
<dbReference type="OMA" id="QHTMRSA"/>
<dbReference type="PAN-GO" id="P26678">
    <property type="GO annotations" value="6 GO annotations based on evolutionary models"/>
</dbReference>
<dbReference type="PhylomeDB" id="P26678"/>
<dbReference type="TreeFam" id="TF330750"/>
<dbReference type="PathwayCommons" id="P26678"/>
<dbReference type="Reactome" id="R-HSA-5578775">
    <property type="pathway name" value="Ion homeostasis"/>
</dbReference>
<dbReference type="Reactome" id="R-HSA-936837">
    <property type="pathway name" value="Ion transport by P-type ATPases"/>
</dbReference>
<dbReference type="SignaLink" id="P26678"/>
<dbReference type="SIGNOR" id="P26678"/>
<dbReference type="BioGRID-ORCS" id="5350">
    <property type="hits" value="12 hits in 653 CRISPR screens"/>
</dbReference>
<dbReference type="ChiTaRS" id="PLN">
    <property type="organism name" value="human"/>
</dbReference>
<dbReference type="EvolutionaryTrace" id="P26678"/>
<dbReference type="GeneWiki" id="Phospholamban"/>
<dbReference type="GenomeRNAi" id="5350"/>
<dbReference type="Pharos" id="P26678">
    <property type="development level" value="Tbio"/>
</dbReference>
<dbReference type="PRO" id="PR:P26678"/>
<dbReference type="Proteomes" id="UP000005640">
    <property type="component" value="Chromosome 6"/>
</dbReference>
<dbReference type="RNAct" id="P26678">
    <property type="molecule type" value="protein"/>
</dbReference>
<dbReference type="Bgee" id="ENSG00000198523">
    <property type="expression patterns" value="Expressed in heart right ventricle and 177 other cell types or tissues"/>
</dbReference>
<dbReference type="ExpressionAtlas" id="P26678">
    <property type="expression patterns" value="baseline and differential"/>
</dbReference>
<dbReference type="GO" id="GO:0090534">
    <property type="term" value="C:calcium ion-transporting ATPase complex"/>
    <property type="evidence" value="ECO:0000314"/>
    <property type="project" value="BHF-UCL"/>
</dbReference>
<dbReference type="GO" id="GO:0005783">
    <property type="term" value="C:endoplasmic reticulum"/>
    <property type="evidence" value="ECO:0000250"/>
    <property type="project" value="BHF-UCL"/>
</dbReference>
<dbReference type="GO" id="GO:0005789">
    <property type="term" value="C:endoplasmic reticulum membrane"/>
    <property type="evidence" value="ECO:0000250"/>
    <property type="project" value="UniProtKB"/>
</dbReference>
<dbReference type="GO" id="GO:0016020">
    <property type="term" value="C:membrane"/>
    <property type="evidence" value="ECO:0000314"/>
    <property type="project" value="BHF-UCL"/>
</dbReference>
<dbReference type="GO" id="GO:0031966">
    <property type="term" value="C:mitochondrial membrane"/>
    <property type="evidence" value="ECO:0007669"/>
    <property type="project" value="UniProtKB-SubCell"/>
</dbReference>
<dbReference type="GO" id="GO:0005739">
    <property type="term" value="C:mitochondrion"/>
    <property type="evidence" value="ECO:0007005"/>
    <property type="project" value="UniProtKB"/>
</dbReference>
<dbReference type="GO" id="GO:0048471">
    <property type="term" value="C:perinuclear region of cytoplasm"/>
    <property type="evidence" value="ECO:0000250"/>
    <property type="project" value="BHF-UCL"/>
</dbReference>
<dbReference type="GO" id="GO:1990629">
    <property type="term" value="C:phospholamban complex"/>
    <property type="evidence" value="ECO:0000353"/>
    <property type="project" value="ComplexPortal"/>
</dbReference>
<dbReference type="GO" id="GO:0016529">
    <property type="term" value="C:sarcoplasmic reticulum"/>
    <property type="evidence" value="ECO:0000318"/>
    <property type="project" value="GO_Central"/>
</dbReference>
<dbReference type="GO" id="GO:0033017">
    <property type="term" value="C:sarcoplasmic reticulum membrane"/>
    <property type="evidence" value="ECO:0000250"/>
    <property type="project" value="UniProtKB"/>
</dbReference>
<dbReference type="GO" id="GO:0031982">
    <property type="term" value="C:vesicle"/>
    <property type="evidence" value="ECO:0007669"/>
    <property type="project" value="Ensembl"/>
</dbReference>
<dbReference type="GO" id="GO:0051117">
    <property type="term" value="F:ATPase binding"/>
    <property type="evidence" value="ECO:0000250"/>
    <property type="project" value="BHF-UCL"/>
</dbReference>
<dbReference type="GO" id="GO:0042030">
    <property type="term" value="F:ATPase inhibitor activity"/>
    <property type="evidence" value="ECO:0000314"/>
    <property type="project" value="BHF-UCL"/>
</dbReference>
<dbReference type="GO" id="GO:0004857">
    <property type="term" value="F:enzyme inhibitor activity"/>
    <property type="evidence" value="ECO:0000250"/>
    <property type="project" value="BHF-UCL"/>
</dbReference>
<dbReference type="GO" id="GO:0042802">
    <property type="term" value="F:identical protein binding"/>
    <property type="evidence" value="ECO:0000250"/>
    <property type="project" value="BHF-UCL"/>
</dbReference>
<dbReference type="GO" id="GO:0042803">
    <property type="term" value="F:protein homodimerization activity"/>
    <property type="evidence" value="ECO:0000250"/>
    <property type="project" value="UniProtKB"/>
</dbReference>
<dbReference type="GO" id="GO:0044325">
    <property type="term" value="F:transmembrane transporter binding"/>
    <property type="evidence" value="ECO:0000353"/>
    <property type="project" value="BHF-UCL"/>
</dbReference>
<dbReference type="GO" id="GO:0141110">
    <property type="term" value="F:transporter inhibitor activity"/>
    <property type="evidence" value="ECO:0000314"/>
    <property type="project" value="BHF-UCL"/>
</dbReference>
<dbReference type="GO" id="GO:0001675">
    <property type="term" value="P:acrosome assembly"/>
    <property type="evidence" value="ECO:0000250"/>
    <property type="project" value="UniProtKB"/>
</dbReference>
<dbReference type="GO" id="GO:0086023">
    <property type="term" value="P:adenylate cyclase-activating adrenergic receptor signaling pathway involved in heart process"/>
    <property type="evidence" value="ECO:0007669"/>
    <property type="project" value="Ensembl"/>
</dbReference>
<dbReference type="GO" id="GO:0008015">
    <property type="term" value="P:blood circulation"/>
    <property type="evidence" value="ECO:0000303"/>
    <property type="project" value="ProtInc"/>
</dbReference>
<dbReference type="GO" id="GO:0006816">
    <property type="term" value="P:calcium ion transport"/>
    <property type="evidence" value="ECO:0007669"/>
    <property type="project" value="Ensembl"/>
</dbReference>
<dbReference type="GO" id="GO:0048738">
    <property type="term" value="P:cardiac muscle tissue development"/>
    <property type="evidence" value="ECO:0007669"/>
    <property type="project" value="Ensembl"/>
</dbReference>
<dbReference type="GO" id="GO:0050802">
    <property type="term" value="P:circadian sleep/wake cycle, sleep"/>
    <property type="evidence" value="ECO:0000250"/>
    <property type="project" value="UniProtKB"/>
</dbReference>
<dbReference type="GO" id="GO:0006874">
    <property type="term" value="P:intracellular calcium ion homeostasis"/>
    <property type="evidence" value="ECO:0000250"/>
    <property type="project" value="UniProtKB"/>
</dbReference>
<dbReference type="GO" id="GO:0045475">
    <property type="term" value="P:locomotor rhythm"/>
    <property type="evidence" value="ECO:0000250"/>
    <property type="project" value="UniProtKB"/>
</dbReference>
<dbReference type="GO" id="GO:0046716">
    <property type="term" value="P:muscle cell cellular homeostasis"/>
    <property type="evidence" value="ECO:0007669"/>
    <property type="project" value="Ensembl"/>
</dbReference>
<dbReference type="GO" id="GO:0032780">
    <property type="term" value="P:negative regulation of ATP-dependent activity"/>
    <property type="evidence" value="ECO:0000250"/>
    <property type="project" value="BHF-UCL"/>
</dbReference>
<dbReference type="GO" id="GO:1901895">
    <property type="term" value="P:negative regulation of ATPase-coupled calcium transmembrane transporter activity"/>
    <property type="evidence" value="ECO:0000314"/>
    <property type="project" value="UniProtKB"/>
</dbReference>
<dbReference type="GO" id="GO:1901877">
    <property type="term" value="P:negative regulation of calcium ion binding"/>
    <property type="evidence" value="ECO:0000250"/>
    <property type="project" value="BHF-UCL"/>
</dbReference>
<dbReference type="GO" id="GO:0090281">
    <property type="term" value="P:negative regulation of calcium ion import"/>
    <property type="evidence" value="ECO:0000250"/>
    <property type="project" value="BHF-UCL"/>
</dbReference>
<dbReference type="GO" id="GO:1902081">
    <property type="term" value="P:negative regulation of calcium ion import into sarcoplasmic reticulum"/>
    <property type="evidence" value="ECO:0000314"/>
    <property type="project" value="BHF-UCL"/>
</dbReference>
<dbReference type="GO" id="GO:1901020">
    <property type="term" value="P:negative regulation of calcium ion transmembrane transporter activity"/>
    <property type="evidence" value="ECO:0000250"/>
    <property type="project" value="BHF-UCL"/>
</dbReference>
<dbReference type="GO" id="GO:0051926">
    <property type="term" value="P:negative regulation of calcium ion transport"/>
    <property type="evidence" value="ECO:0000314"/>
    <property type="project" value="BHF-UCL"/>
</dbReference>
<dbReference type="GO" id="GO:0010459">
    <property type="term" value="P:negative regulation of heart rate"/>
    <property type="evidence" value="ECO:0000315"/>
    <property type="project" value="BHF-UCL"/>
</dbReference>
<dbReference type="GO" id="GO:0007219">
    <property type="term" value="P:Notch signaling pathway"/>
    <property type="evidence" value="ECO:0007669"/>
    <property type="project" value="Ensembl"/>
</dbReference>
<dbReference type="GO" id="GO:1901894">
    <property type="term" value="P:regulation of ATPase-coupled calcium transmembrane transporter activity"/>
    <property type="evidence" value="ECO:0000314"/>
    <property type="project" value="UniProtKB"/>
</dbReference>
<dbReference type="GO" id="GO:0051924">
    <property type="term" value="P:regulation of calcium ion transport"/>
    <property type="evidence" value="ECO:0000314"/>
    <property type="project" value="UniProtKB"/>
</dbReference>
<dbReference type="GO" id="GO:0086004">
    <property type="term" value="P:regulation of cardiac muscle cell contraction"/>
    <property type="evidence" value="ECO:0000314"/>
    <property type="project" value="ComplexPortal"/>
</dbReference>
<dbReference type="GO" id="GO:0086036">
    <property type="term" value="P:regulation of cardiac muscle cell membrane potential"/>
    <property type="evidence" value="ECO:0000305"/>
    <property type="project" value="BHF-UCL"/>
</dbReference>
<dbReference type="GO" id="GO:0010881">
    <property type="term" value="P:regulation of cardiac muscle contraction by regulation of the release of sequestered calcium ion"/>
    <property type="evidence" value="ECO:0007669"/>
    <property type="project" value="Ensembl"/>
</dbReference>
<dbReference type="GO" id="GO:0051480">
    <property type="term" value="P:regulation of cytosolic calcium ion concentration"/>
    <property type="evidence" value="ECO:0000314"/>
    <property type="project" value="BHF-UCL"/>
</dbReference>
<dbReference type="GO" id="GO:0008016">
    <property type="term" value="P:regulation of heart contraction"/>
    <property type="evidence" value="ECO:0000315"/>
    <property type="project" value="BHF-UCL"/>
</dbReference>
<dbReference type="GO" id="GO:1901897">
    <property type="term" value="P:regulation of relaxation of cardiac muscle"/>
    <property type="evidence" value="ECO:0000305"/>
    <property type="project" value="BHF-UCL"/>
</dbReference>
<dbReference type="GO" id="GO:0002026">
    <property type="term" value="P:regulation of the force of heart contraction"/>
    <property type="evidence" value="ECO:0000305"/>
    <property type="project" value="BHF-UCL"/>
</dbReference>
<dbReference type="GO" id="GO:0086092">
    <property type="term" value="P:regulation of the force of heart contraction by cardiac conduction"/>
    <property type="evidence" value="ECO:0007669"/>
    <property type="project" value="Ensembl"/>
</dbReference>
<dbReference type="GO" id="GO:0055119">
    <property type="term" value="P:relaxation of cardiac muscle"/>
    <property type="evidence" value="ECO:0000304"/>
    <property type="project" value="BHF-UCL"/>
</dbReference>
<dbReference type="GO" id="GO:0032868">
    <property type="term" value="P:response to insulin"/>
    <property type="evidence" value="ECO:0007669"/>
    <property type="project" value="Ensembl"/>
</dbReference>
<dbReference type="GO" id="GO:0033574">
    <property type="term" value="P:response to testosterone"/>
    <property type="evidence" value="ECO:0007669"/>
    <property type="project" value="Ensembl"/>
</dbReference>
<dbReference type="GO" id="GO:0010043">
    <property type="term" value="P:response to zinc ion"/>
    <property type="evidence" value="ECO:0007669"/>
    <property type="project" value="Ensembl"/>
</dbReference>
<dbReference type="GO" id="GO:0008542">
    <property type="term" value="P:visual learning"/>
    <property type="evidence" value="ECO:0000250"/>
    <property type="project" value="UniProtKB"/>
</dbReference>
<dbReference type="CDD" id="cd20250">
    <property type="entry name" value="Phospholamban"/>
    <property type="match status" value="1"/>
</dbReference>
<dbReference type="FunFam" id="1.20.5.290:FF:000001">
    <property type="entry name" value="Cardiac phospholamban"/>
    <property type="match status" value="1"/>
</dbReference>
<dbReference type="Gene3D" id="1.20.5.290">
    <property type="entry name" value="Phospholamban"/>
    <property type="match status" value="1"/>
</dbReference>
<dbReference type="InterPro" id="IPR005984">
    <property type="entry name" value="PLB"/>
</dbReference>
<dbReference type="NCBIfam" id="TIGR01294">
    <property type="entry name" value="P_lamban"/>
    <property type="match status" value="1"/>
</dbReference>
<dbReference type="PANTHER" id="PTHR21194">
    <property type="entry name" value="CARDIAC PHOSPHOLAMBAN"/>
    <property type="match status" value="1"/>
</dbReference>
<dbReference type="PANTHER" id="PTHR21194:SF1">
    <property type="entry name" value="CARDIAC PHOSPHOLAMBAN"/>
    <property type="match status" value="1"/>
</dbReference>
<dbReference type="Pfam" id="PF04272">
    <property type="entry name" value="Phospholamban"/>
    <property type="match status" value="1"/>
</dbReference>
<dbReference type="PIRSF" id="PIRSF001665">
    <property type="entry name" value="PLB"/>
    <property type="match status" value="1"/>
</dbReference>
<name>PPLA_HUMAN</name>
<organism>
    <name type="scientific">Homo sapiens</name>
    <name type="common">Human</name>
    <dbReference type="NCBI Taxonomy" id="9606"/>
    <lineage>
        <taxon>Eukaryota</taxon>
        <taxon>Metazoa</taxon>
        <taxon>Chordata</taxon>
        <taxon>Craniata</taxon>
        <taxon>Vertebrata</taxon>
        <taxon>Euteleostomi</taxon>
        <taxon>Mammalia</taxon>
        <taxon>Eutheria</taxon>
        <taxon>Euarchontoglires</taxon>
        <taxon>Primates</taxon>
        <taxon>Haplorrhini</taxon>
        <taxon>Catarrhini</taxon>
        <taxon>Hominidae</taxon>
        <taxon>Homo</taxon>
    </lineage>
</organism>
<feature type="chain" id="PRO_0000191244" description="Phospholamban">
    <location>
        <begin position="1"/>
        <end position="52"/>
    </location>
</feature>
<feature type="topological domain" description="Cytoplasmic" evidence="20">
    <location>
        <begin position="1"/>
        <end position="31"/>
    </location>
</feature>
<feature type="transmembrane region" description="Helical" evidence="20">
    <location>
        <begin position="32"/>
        <end position="52"/>
    </location>
</feature>
<feature type="region of interest" description="Involved in HAX1 binding">
    <location>
        <begin position="16"/>
        <end position="22"/>
    </location>
</feature>
<feature type="modified residue" description="N-acetylmethionine" evidence="1">
    <location>
        <position position="1"/>
    </location>
</feature>
<feature type="modified residue" description="Phosphoserine; by PKA and DMPK" evidence="8 16">
    <location>
        <position position="16"/>
    </location>
</feature>
<feature type="modified residue" description="Phosphothreonine; by CaMK2" evidence="11">
    <location>
        <position position="17"/>
    </location>
</feature>
<feature type="lipid moiety-binding region" description="S-palmitoyl cysteine" evidence="3">
    <location>
        <position position="36"/>
    </location>
</feature>
<feature type="sequence variant" id="VAR_025989" description="In CMD1P; impairs phosphorylation by PKA and inhibition of ATP2A1-mediated calcium uptake; dbSNP:rs111033559." evidence="5 15 16">
    <original>R</original>
    <variation>C</variation>
    <location>
        <position position="9"/>
    </location>
</feature>
<feature type="sequence variant" id="VAR_072925" description="In CMD1P; impairs phosphorylation by PKA and inhibition of ATP2A1-mediated calcium uptake; dbSNP:rs754782171." evidence="14 16">
    <original>R</original>
    <variation>H</variation>
    <location>
        <position position="9"/>
    </location>
</feature>
<feature type="sequence variant" id="VAR_072926" description="In CMD1P; impairs phosphorylation by PKA and inhibition of ATP2A1-mediated calcium uptake." evidence="14 16">
    <original>R</original>
    <variation>L</variation>
    <location>
        <position position="9"/>
    </location>
</feature>
<feature type="sequence variant" id="VAR_025990" description="In CMD1P; impairs phosphorylation by PKA, destabilizes the homopentamer and mildly reduces inhibition of ATP2A1-mediated calcium uptake; dbSNP:rs397516784." evidence="10 15 16">
    <location>
        <position position="14"/>
    </location>
</feature>
<feature type="mutagenesis site" description="Abolishes phosphorylation by PKA." evidence="16">
    <original>R</original>
    <variation>A</variation>
    <location>
        <position position="13"/>
    </location>
</feature>
<feature type="mutagenesis site" description="Abolishes phosphorylation by PKA." evidence="16">
    <original>R</original>
    <variation>A</variation>
    <location>
        <position position="14"/>
    </location>
</feature>
<feature type="mutagenesis site" description="Abolishes phosphorylation by PKA." evidence="16">
    <original>S</original>
    <variation>A</variation>
    <location>
        <position position="16"/>
    </location>
</feature>
<feature type="mutagenesis site" description="No effect on phosphorylation by PKA." evidence="16">
    <original>T</original>
    <variation>A</variation>
    <location>
        <position position="17"/>
    </location>
</feature>
<feature type="helix" evidence="22">
    <location>
        <begin position="4"/>
        <end position="14"/>
    </location>
</feature>
<feature type="strand" evidence="22">
    <location>
        <begin position="18"/>
        <end position="20"/>
    </location>
</feature>
<feature type="helix" evidence="23">
    <location>
        <begin position="23"/>
        <end position="50"/>
    </location>
</feature>
<reference key="1">
    <citation type="journal article" date="1991" name="J. Biol. Chem.">
        <title>Structure of the rabbit phospholamban gene, cloning of the human cDNA, and assignment of the gene to human chromosome 6.</title>
        <authorList>
            <person name="Fujii J."/>
            <person name="Zarain-Herzberg A."/>
            <person name="Willard H.F."/>
            <person name="Tada M."/>
            <person name="Maclennan D.H."/>
        </authorList>
    </citation>
    <scope>NUCLEOTIDE SEQUENCE [MRNA]</scope>
</reference>
<reference key="2">
    <citation type="submission" date="1991-03" db="EMBL/GenBank/DDBJ databases">
        <title>Cloning of human cardiac phospholamban.</title>
        <authorList>
            <person name="Salvatore C.A."/>
            <person name="Jacobson M.A."/>
        </authorList>
    </citation>
    <scope>NUCLEOTIDE SEQUENCE [MRNA]</scope>
</reference>
<reference key="3">
    <citation type="journal article" date="1999" name="J. Mol. Cell. Cardiol.">
        <title>The human phospholamban gene: structure and expression.</title>
        <authorList>
            <person name="McTiernan C.F."/>
            <person name="Frye C.S."/>
            <person name="Lemster B.H."/>
            <person name="Kinder E.A."/>
            <person name="Ogletree-Hughes M.L."/>
            <person name="Moravec C.S."/>
            <person name="Feldman A.M."/>
        </authorList>
    </citation>
    <scope>NUCLEOTIDE SEQUENCE [GENOMIC DNA]</scope>
</reference>
<reference key="4">
    <citation type="journal article" date="2004" name="Genome Res.">
        <title>The status, quality, and expansion of the NIH full-length cDNA project: the Mammalian Gene Collection (MGC).</title>
        <authorList>
            <consortium name="The MGC Project Team"/>
        </authorList>
    </citation>
    <scope>NUCLEOTIDE SEQUENCE [LARGE SCALE MRNA]</scope>
    <source>
        <tissue>Liver</tissue>
    </source>
</reference>
<reference key="5">
    <citation type="journal article" date="2003" name="Biochem. Biophys. Res. Commun.">
        <title>Mutation of the phospholamban promoter associated with hypertrophic cardiomyopathy.</title>
        <authorList>
            <person name="Minamisawa S."/>
            <person name="Sato Y."/>
            <person name="Tatsuguchi Y."/>
            <person name="Fujino T."/>
            <person name="Imamura S."/>
            <person name="Uetsuka Y."/>
            <person name="Nakazawa M."/>
            <person name="Matsuoka R."/>
        </authorList>
    </citation>
    <scope>INVOLVEMENT IN CMH18</scope>
</reference>
<reference key="6">
    <citation type="journal article" date="2003" name="Biochem. Biophys. Res. Commun.">
        <title>Ca2+ -dependent interaction of S100A1 with the sarcoplasmic reticulum Ca2+ -ATPase2a and phospholamban in the human heart.</title>
        <authorList>
            <person name="Kiewitz R."/>
            <person name="Acklin C."/>
            <person name="Schaefer B.W."/>
            <person name="Maco B."/>
            <person name="Uhrik B."/>
            <person name="Wuytack F."/>
            <person name="Erne P."/>
            <person name="Heizmann C.W."/>
        </authorList>
    </citation>
    <scope>INTERACTION WITH S100A1</scope>
    <scope>SUBCELLULAR LOCATION</scope>
</reference>
<reference key="7">
    <citation type="journal article" date="2005" name="J. Biol. Chem.">
        <title>Myotonic dystrophy protein kinase phosphorylates phospholamban and regulates calcium uptake in cardiomyocyte sarcoplasmic reticulum.</title>
        <authorList>
            <person name="Kaliman P."/>
            <person name="Catalucci D."/>
            <person name="Lam J.T."/>
            <person name="Kondo R."/>
            <person name="Gutierrez J.C."/>
            <person name="Reddy S."/>
            <person name="Palacin M."/>
            <person name="Zorzano A."/>
            <person name="Chien K.R."/>
            <person name="Ruiz-Lozano P."/>
        </authorList>
    </citation>
    <scope>PHOSPHORYLATION AT SER-16 BY DMPK</scope>
    <scope>SUBCELLULAR LOCATION</scope>
</reference>
<reference key="8">
    <citation type="journal article" date="2006" name="J. Physiol. (Lond.)">
        <title>Ca2+-calmodulin-dependent protein kinase expression and signalling in skeletal muscle during exercise.</title>
        <authorList>
            <person name="Rose A.J."/>
            <person name="Kiens B."/>
            <person name="Richter E.A."/>
        </authorList>
    </citation>
    <scope>PHOSPHORYLATION AT THR-17 BY CAMK2</scope>
</reference>
<reference key="9">
    <citation type="journal article" date="2007" name="J. Mol. Biol.">
        <title>Phospholamban interacts with HAX-1, a mitochondrial protein with anti-apoptotic function.</title>
        <authorList>
            <person name="Vafiadaki E."/>
            <person name="Sanoudou D."/>
            <person name="Arvanitis D.A."/>
            <person name="Catino D.H."/>
            <person name="Kranias E.G."/>
            <person name="Kontrogianni-Konstantopoulos A."/>
        </authorList>
    </citation>
    <scope>INTERACTION WITH HAX1</scope>
    <scope>SUBCELLULAR LOCATION</scope>
    <scope>TISSUE SPECIFICITY</scope>
</reference>
<reference key="10">
    <citation type="journal article" date="2012" name="J. Biol. Chem.">
        <title>Lethal, hereditary mutants of phospholamban elude phosphorylation by protein kinase A.</title>
        <authorList>
            <person name="Ceholski D.K."/>
            <person name="Trieber C.A."/>
            <person name="Holmes C.F."/>
            <person name="Young H.S."/>
        </authorList>
    </citation>
    <scope>FUNCTION</scope>
    <scope>CHARACTERIZATION OF VARIANTS CMD1P HIS-9; LEU-9; CYS-9 AND ARG-14 DEL</scope>
    <scope>PHOSPHORYLATION AT SER-16</scope>
    <scope>MUTAGENESIS OF ARG-13; ARG-14; SER-16 AND THR-17</scope>
</reference>
<reference key="11">
    <citation type="journal article" date="2014" name="J. Proteomics">
        <title>An enzyme assisted RP-RPLC approach for in-depth analysis of human liver phosphoproteome.</title>
        <authorList>
            <person name="Bian Y."/>
            <person name="Song C."/>
            <person name="Cheng K."/>
            <person name="Dong M."/>
            <person name="Wang F."/>
            <person name="Huang J."/>
            <person name="Sun D."/>
            <person name="Wang L."/>
            <person name="Ye M."/>
            <person name="Zou H."/>
        </authorList>
    </citation>
    <scope>IDENTIFICATION BY MASS SPECTROMETRY [LARGE SCALE ANALYSIS]</scope>
    <source>
        <tissue>Liver</tissue>
    </source>
</reference>
<reference key="12">
    <citation type="journal article" date="2017" name="Mol. Cell">
        <title>The ER-Localized Transmembrane Protein EPG-3/VMP1 Regulates SERCA Activity to Control ER-Isolation Membrane Contacts for Autophagosome Formation.</title>
        <authorList>
            <person name="Zhao Y.G."/>
            <person name="Chen Y."/>
            <person name="Miao G."/>
            <person name="Zhao H."/>
            <person name="Qu W."/>
            <person name="Li D."/>
            <person name="Wang Z."/>
            <person name="Liu N."/>
            <person name="Li L."/>
            <person name="Chen S."/>
            <person name="Liu P."/>
            <person name="Feng D."/>
            <person name="Zhang H."/>
        </authorList>
    </citation>
    <scope>FUNCTION</scope>
    <scope>INTERACTION WITH ATP2A2 AND VMP1</scope>
</reference>
<reference key="13">
    <citation type="journal article" date="2023" name="Biophys. J.">
        <title>Micropeptide hetero-oligomerization adds complexity to the calcium pump regulatory network.</title>
        <authorList>
            <person name="Phillips T.A."/>
            <person name="Hauck G.T."/>
            <person name="Pribadi M.P."/>
            <person name="Cho E.E."/>
            <person name="Cleary S.R."/>
            <person name="Robia S.L."/>
        </authorList>
    </citation>
    <scope>SUBUNIT</scope>
    <scope>INTERACTION WITH ATP2A2</scope>
</reference>
<reference key="14">
    <citation type="journal article" date="1995" name="Biochemistry">
        <title>Solution structure of the cytoplasmic domain of phospholamban: phosphorylation leads to a local perturbation in secondary structure.</title>
        <authorList>
            <person name="Mortishire-Smith R.J."/>
            <person name="Pitzenberger S.M."/>
            <person name="Burke C.J."/>
            <person name="Middaugh C.R."/>
            <person name="Garsky V.M."/>
            <person name="Johnson R.G."/>
        </authorList>
    </citation>
    <scope>STRUCTURE BY NMR OF 1-25</scope>
</reference>
<reference key="15">
    <citation type="journal article" date="1995" name="Nat. Struct. Biol.">
        <title>Computational searching and mutagenesis suggest a structure for the pentameric transmembrane domain of phospholamban.</title>
        <authorList>
            <person name="Adams P.D."/>
            <person name="Arkin I.T."/>
            <person name="Engelman D.M."/>
            <person name="Bruenger A.T."/>
        </authorList>
    </citation>
    <scope>3D-STRUCTURE MODELING</scope>
</reference>
<reference key="16">
    <citation type="journal article" date="1998" name="Biophys. J.">
        <title>Using experimental information to produce a model of the transmembrane domain of the ion channel phospholamban.</title>
        <authorList>
            <person name="Herzyk P."/>
            <person name="Hubbard R.E."/>
        </authorList>
    </citation>
    <scope>3D-STRUCTURE MODELING</scope>
</reference>
<reference key="17">
    <citation type="journal article" date="2005" name="Proc. Natl. Acad. Sci. U.S.A.">
        <title>The structure of phospholamban pentamer reveals a channel-like architecture in membranes.</title>
        <authorList>
            <person name="Oxenoid K."/>
            <person name="Chou J.J."/>
        </authorList>
    </citation>
    <scope>STRUCTURE BY NMR</scope>
    <scope>SUBUNIT</scope>
</reference>
<reference key="18">
    <citation type="journal article" date="2006" name="Proteins">
        <title>Structure determination of symmetric homo-oligomers by a complete search of symmetry configuration space, using NMR restraints and van der Waals packing.</title>
        <authorList>
            <person name="Potluri S."/>
            <person name="Yan A.K."/>
            <person name="Chou J.J."/>
            <person name="Donald B.R."/>
            <person name="Bailey-Kellogg C."/>
        </authorList>
    </citation>
    <scope>STRUCTURE BY NMR</scope>
    <scope>SUBUNIT</scope>
</reference>
<reference key="19">
    <citation type="journal article" date="2003" name="Science">
        <title>Dilated cardiomyopathy and heart failure caused by a mutation in phospholamban.</title>
        <authorList>
            <person name="Schmitt J.P."/>
            <person name="Kamisago M."/>
            <person name="Asahi M."/>
            <person name="Li G.H."/>
            <person name="Ahmad F."/>
            <person name="Mende U."/>
            <person name="Kranias E.G."/>
            <person name="MacLennan D.H."/>
            <person name="Seidman J.G."/>
            <person name="Seidman C.E."/>
        </authorList>
    </citation>
    <scope>VARIANT CMD1P CYS-9</scope>
    <scope>CHARACTERIZATION OF VARIANT CMD1P CYS-9</scope>
</reference>
<reference key="20">
    <citation type="journal article" date="2006" name="Proc. Natl. Acad. Sci. U.S.A.">
        <title>A mutation in the human phospholamban gene, deleting arginine 14, results in lethal, hereditary cardiomyopathy.</title>
        <authorList>
            <person name="Haghighi K."/>
            <person name="Kolokathis F."/>
            <person name="Gramolini A.O."/>
            <person name="Waggoner J.R."/>
            <person name="Pater L."/>
            <person name="Lynch R.A."/>
            <person name="Fan G.C."/>
            <person name="Tsiapras D."/>
            <person name="Parekh R.R."/>
            <person name="Dorn G.W. II"/>
            <person name="MacLennan D.H."/>
            <person name="Kremastinos D.T."/>
            <person name="Kranias E.G."/>
        </authorList>
    </citation>
    <scope>VARIANT CMD1P ARG-14 DEL</scope>
    <scope>CHARACTERIZATION OF VARIANT CMD1P ARG-14 DEL</scope>
</reference>
<reference key="21">
    <citation type="journal article" date="2011" name="Am. Heart J.">
        <title>Mutations in the human phospholamban gene in patients with heart failure.</title>
        <authorList>
            <person name="Medeiros A."/>
            <person name="Biagi D.G."/>
            <person name="Sobreira T.J."/>
            <person name="de Oliveira P.S."/>
            <person name="Negrao C.E."/>
            <person name="Mansur A.J."/>
            <person name="Krieger J.E."/>
            <person name="Brum P.C."/>
            <person name="Pereira A.C."/>
        </authorList>
    </citation>
    <scope>VARIANTS CMD1P HIS-9 AND LEU-9</scope>
</reference>
<reference key="22">
    <citation type="journal article" date="2012" name="J. Biol. Chem.">
        <title>Hydrophobic imbalance in the cytoplasmic domain of phospholamban is a determinant for lethal dilated cardiomyopathy.</title>
        <authorList>
            <person name="Ceholski D.K."/>
            <person name="Trieber C.A."/>
            <person name="Young H.S."/>
        </authorList>
    </citation>
    <scope>CHARACTERIZATION OF VARIANTS CMD1P CYS-9 AND ARG-14 DEL</scope>
    <scope>FUNCTION</scope>
    <scope>SUBCELLULAR LOCATION</scope>
</reference>
<keyword id="KW-0002">3D-structure</keyword>
<keyword id="KW-0007">Acetylation</keyword>
<keyword id="KW-0122">Cardiomyopathy</keyword>
<keyword id="KW-0225">Disease variant</keyword>
<keyword id="KW-0256">Endoplasmic reticulum</keyword>
<keyword id="KW-0449">Lipoprotein</keyword>
<keyword id="KW-0472">Membrane</keyword>
<keyword id="KW-0496">Mitochondrion</keyword>
<keyword id="KW-0564">Palmitate</keyword>
<keyword id="KW-0597">Phosphoprotein</keyword>
<keyword id="KW-1267">Proteomics identification</keyword>
<keyword id="KW-1185">Reference proteome</keyword>
<keyword id="KW-0703">Sarcoplasmic reticulum</keyword>
<keyword id="KW-0812">Transmembrane</keyword>
<keyword id="KW-1133">Transmembrane helix</keyword>
<proteinExistence type="evidence at protein level"/>
<sequence length="52" mass="6109">MEKVQYLTRSAIRRASTIEMPQQARQKLQNLFINFCLILICLLLICIIVMLL</sequence>
<accession>P26678</accession>
<comment type="function">
    <text evidence="2 3 15 16 17">Reversibly inhibits the activity of ATP2A2/SERCA2 in cardiac sarcoplasmic reticulum by decreasing the apparent affinity of the ATPase for Ca(2+) (PubMed:28890335). Binds preferentially to the ATP-bound E1 conformational form of ATP2A2 which predominates at low Ca(2+) concentrations during the diastolic phase of the cardiac cycle (By similarity). Inhibits ATP2A2 Ca(2+) affinity by disrupting its allosteric activation by ATP (By similarity). Modulates the contractility of the heart muscle in response to physiological stimuli via its effects on ATP2A2. Modulates calcium re-uptake during muscle relaxation and plays an important role in calcium homeostasis in the heart muscle. The degree of ATP2A2 inhibition depends on the oligomeric state of PLN. ATP2A2 inhibition is alleviated by PLN phosphorylation (By similarity). Also inhibits the activity of ATP2A3/SERCA3 (By similarity). Controls intracellular Ca(2+) levels in elongated spermatids and may play a role in germ cell differentiation (By similarity). In the thalamic reticular nucleus of the brain, plays a role in the regulation of sleep patterns and executive functioning (By similarity).</text>
</comment>
<comment type="subunit">
    <text evidence="3 7 9 12 13 17 18">Homopentamer (PubMed:16043693, PubMed:16897780). Can also form heterooligomers with other sarcoplasmic/endoplasmic reticulum calcium ATPase (SERCA) regulators ARLN, ERLN, SLN and STRIT1/DWORF (PubMed:36523160). Monomer (By similarity). Interacts with HAX1 (PubMed:17241641). Interacts as a monomer with ATP2A2; the interaction decreases ATP2A2 Ca(2+) affinity (PubMed:28890335, PubMed:36523160). Interacts with VMP1; VMP1 competes with PLN and SLN to prevent them from forming an inhibitory complex with ATP2A2 (PubMed:28890335). Interacts with S100A1 in a Ca(2+)-dependent manner (PubMed:12804600).</text>
</comment>
<comment type="interaction">
    <interactant intactId="EBI-692836">
        <id>P26678</id>
    </interactant>
    <interactant intactId="EBI-11343438">
        <id>Q3SXY8</id>
        <label>ARL13B</label>
    </interactant>
    <organismsDiffer>false</organismsDiffer>
    <experiments>3</experiments>
</comment>
<comment type="interaction">
    <interactant intactId="EBI-692836">
        <id>P26678</id>
    </interactant>
    <interactant intactId="EBI-12808270">
        <id>P07307-3</id>
        <label>ASGR2</label>
    </interactant>
    <organismsDiffer>false</organismsDiffer>
    <experiments>3</experiments>
</comment>
<comment type="interaction">
    <interactant intactId="EBI-692836">
        <id>P26678</id>
    </interactant>
    <interactant intactId="EBI-12935759">
        <id>O15342</id>
        <label>ATP6V0E1</label>
    </interactant>
    <organismsDiffer>false</organismsDiffer>
    <experiments>3</experiments>
</comment>
<comment type="interaction">
    <interactant intactId="EBI-692836">
        <id>P26678</id>
    </interactant>
    <interactant intactId="EBI-747430">
        <id>Q9BXK5</id>
        <label>BCL2L13</label>
    </interactant>
    <organismsDiffer>false</organismsDiffer>
    <experiments>8</experiments>
</comment>
<comment type="interaction">
    <interactant intactId="EBI-692836">
        <id>P26678</id>
    </interactant>
    <interactant intactId="EBI-700794">
        <id>Q13323</id>
        <label>BIK</label>
    </interactant>
    <organismsDiffer>false</organismsDiffer>
    <experiments>3</experiments>
</comment>
<comment type="interaction">
    <interactant intactId="EBI-692836">
        <id>P26678</id>
    </interactant>
    <interactant intactId="EBI-6657396">
        <id>P19397</id>
        <label>CD53</label>
    </interactant>
    <organismsDiffer>false</organismsDiffer>
    <experiments>3</experiments>
</comment>
<comment type="interaction">
    <interactant intactId="EBI-692836">
        <id>P26678</id>
    </interactant>
    <interactant intactId="EBI-740744">
        <id>O95471</id>
        <label>CLDN7</label>
    </interactant>
    <organismsDiffer>false</organismsDiffer>
    <experiments>3</experiments>
</comment>
<comment type="interaction">
    <interactant intactId="EBI-692836">
        <id>P26678</id>
    </interactant>
    <interactant intactId="EBI-11749983">
        <id>Q9UHP7-3</id>
        <label>CLEC2D</label>
    </interactant>
    <organismsDiffer>false</organismsDiffer>
    <experiments>3</experiments>
</comment>
<comment type="interaction">
    <interactant intactId="EBI-692836">
        <id>P26678</id>
    </interactant>
    <interactant intactId="EBI-18013275">
        <id>Q7Z7G2</id>
        <label>CPLX4</label>
    </interactant>
    <organismsDiffer>false</organismsDiffer>
    <experiments>3</experiments>
</comment>
<comment type="interaction">
    <interactant intactId="EBI-692836">
        <id>P26678</id>
    </interactant>
    <interactant intactId="EBI-625022">
        <id>O43889-2</id>
        <label>CREB3</label>
    </interactant>
    <organismsDiffer>false</organismsDiffer>
    <experiments>3</experiments>
</comment>
<comment type="interaction">
    <interactant intactId="EBI-692836">
        <id>P26678</id>
    </interactant>
    <interactant intactId="EBI-6942903">
        <id>Q96BA8</id>
        <label>CREB3L1</label>
    </interactant>
    <organismsDiffer>false</organismsDiffer>
    <experiments>3</experiments>
</comment>
<comment type="interaction">
    <interactant intactId="EBI-692836">
        <id>P26678</id>
    </interactant>
    <interactant intactId="EBI-692774">
        <id>Q09013</id>
        <label>DMPK</label>
    </interactant>
    <organismsDiffer>false</organismsDiffer>
    <experiments>4</experiments>
</comment>
<comment type="interaction">
    <interactant intactId="EBI-692836">
        <id>P26678</id>
    </interactant>
    <interactant intactId="EBI-529425">
        <id>Q92838</id>
        <label>EDA</label>
    </interactant>
    <organismsDiffer>false</organismsDiffer>
    <experiments>11</experiments>
</comment>
<comment type="interaction">
    <interactant intactId="EBI-692836">
        <id>P26678</id>
    </interactant>
    <interactant intactId="EBI-18535450">
        <id>Q9GZR5</id>
        <label>ELOVL4</label>
    </interactant>
    <organismsDiffer>false</organismsDiffer>
    <experiments>3</experiments>
</comment>
<comment type="interaction">
    <interactant intactId="EBI-692836">
        <id>P26678</id>
    </interactant>
    <interactant intactId="EBI-18304435">
        <id>Q5JX71</id>
        <label>FAM209A</label>
    </interactant>
    <organismsDiffer>false</organismsDiffer>
    <experiments>3</experiments>
</comment>
<comment type="interaction">
    <interactant intactId="EBI-692836">
        <id>P26678</id>
    </interactant>
    <interactant intactId="EBI-724839">
        <id>Q14318</id>
        <label>FKBP8</label>
    </interactant>
    <organismsDiffer>false</organismsDiffer>
    <experiments>3</experiments>
</comment>
<comment type="interaction">
    <interactant intactId="EBI-692836">
        <id>P26678</id>
    </interactant>
    <interactant intactId="EBI-12142257">
        <id>Q8TBE3</id>
        <label>FNDC9</label>
    </interactant>
    <organismsDiffer>false</organismsDiffer>
    <experiments>3</experiments>
</comment>
<comment type="interaction">
    <interactant intactId="EBI-692836">
        <id>P26678</id>
    </interactant>
    <interactant intactId="EBI-17458373">
        <id>P48165</id>
        <label>GJA8</label>
    </interactant>
    <organismsDiffer>false</organismsDiffer>
    <experiments>3</experiments>
</comment>
<comment type="interaction">
    <interactant intactId="EBI-692836">
        <id>P26678</id>
    </interactant>
    <interactant intactId="EBI-13345167">
        <id>Q8TDT2</id>
        <label>GPR152</label>
    </interactant>
    <organismsDiffer>false</organismsDiffer>
    <experiments>3</experiments>
</comment>
<comment type="interaction">
    <interactant intactId="EBI-692836">
        <id>P26678</id>
    </interactant>
    <interactant intactId="EBI-2927498">
        <id>O60883</id>
        <label>GPR37L1</label>
    </interactant>
    <organismsDiffer>false</organismsDiffer>
    <experiments>3</experiments>
</comment>
<comment type="interaction">
    <interactant intactId="EBI-692836">
        <id>P26678</id>
    </interactant>
    <interactant intactId="EBI-11721746">
        <id>Q8TED1</id>
        <label>GPX8</label>
    </interactant>
    <organismsDiffer>false</organismsDiffer>
    <experiments>3</experiments>
</comment>
<comment type="interaction">
    <interactant intactId="EBI-692836">
        <id>P26678</id>
    </interactant>
    <interactant intactId="EBI-11427100">
        <id>P31937</id>
        <label>HIBADH</label>
    </interactant>
    <organismsDiffer>false</organismsDiffer>
    <experiments>3</experiments>
</comment>
<comment type="interaction">
    <interactant intactId="EBI-692836">
        <id>P26678</id>
    </interactant>
    <interactant intactId="EBI-18053395">
        <id>Q7Z5P4</id>
        <label>HSD17B13</label>
    </interactant>
    <organismsDiffer>false</organismsDiffer>
    <experiments>3</experiments>
</comment>
<comment type="interaction">
    <interactant intactId="EBI-692836">
        <id>P26678</id>
    </interactant>
    <interactant intactId="EBI-8632435">
        <id>P43628</id>
        <label>KIR2DL3</label>
    </interactant>
    <organismsDiffer>false</organismsDiffer>
    <experiments>3</experiments>
</comment>
<comment type="interaction">
    <interactant intactId="EBI-692836">
        <id>P26678</id>
    </interactant>
    <interactant intactId="EBI-10173166">
        <id>Q5T700</id>
        <label>LDLRAD1</label>
    </interactant>
    <organismsDiffer>false</organismsDiffer>
    <experiments>4</experiments>
</comment>
<comment type="interaction">
    <interactant intactId="EBI-692836">
        <id>P26678</id>
    </interactant>
    <interactant intactId="EBI-10264855">
        <id>Q8N112</id>
        <label>LSMEM2</label>
    </interactant>
    <organismsDiffer>false</organismsDiffer>
    <experiments>3</experiments>
</comment>
<comment type="interaction">
    <interactant intactId="EBI-692836">
        <id>P26678</id>
    </interactant>
    <interactant intactId="EBI-11956541">
        <id>Q9GZY8-5</id>
        <label>MFF</label>
    </interactant>
    <organismsDiffer>false</organismsDiffer>
    <experiments>3</experiments>
</comment>
<comment type="interaction">
    <interactant intactId="EBI-692836">
        <id>P26678</id>
    </interactant>
    <interactant intactId="EBI-3920969">
        <id>Q6N075</id>
        <label>MFSD5</label>
    </interactant>
    <organismsDiffer>false</organismsDiffer>
    <experiments>3</experiments>
</comment>
<comment type="interaction">
    <interactant intactId="EBI-692836">
        <id>P26678</id>
    </interactant>
    <interactant intactId="EBI-11324706">
        <id>Q99735</id>
        <label>MGST2</label>
    </interactant>
    <organismsDiffer>false</organismsDiffer>
    <experiments>3</experiments>
</comment>
<comment type="interaction">
    <interactant intactId="EBI-692836">
        <id>P26678</id>
    </interactant>
    <interactant intactId="EBI-724754">
        <id>O14880</id>
        <label>MGST3</label>
    </interactant>
    <organismsDiffer>false</organismsDiffer>
    <experiments>3</experiments>
</comment>
<comment type="interaction">
    <interactant intactId="EBI-692836">
        <id>P26678</id>
    </interactant>
    <interactant intactId="EBI-721391">
        <id>Q9GZW8</id>
        <label>MS4A7</label>
    </interactant>
    <organismsDiffer>false</organismsDiffer>
    <experiments>3</experiments>
</comment>
<comment type="interaction">
    <interactant intactId="EBI-692836">
        <id>P26678</id>
    </interactant>
    <interactant intactId="EBI-3923617">
        <id>Q9H2K0</id>
        <label>MTIF3</label>
    </interactant>
    <organismsDiffer>false</organismsDiffer>
    <experiments>3</experiments>
</comment>
<comment type="interaction">
    <interactant intactId="EBI-692836">
        <id>P26678</id>
    </interactant>
    <interactant intactId="EBI-17263240">
        <id>P15941-11</id>
        <label>MUC1</label>
    </interactant>
    <organismsDiffer>false</organismsDiffer>
    <experiments>3</experiments>
</comment>
<comment type="interaction">
    <interactant intactId="EBI-692836">
        <id>P26678</id>
    </interactant>
    <interactant intactId="EBI-18063495">
        <id>Q8TBJ4</id>
        <label>PLPPR1</label>
    </interactant>
    <organismsDiffer>false</organismsDiffer>
    <experiments>3</experiments>
</comment>
<comment type="interaction">
    <interactant intactId="EBI-692836">
        <id>P26678</id>
    </interactant>
    <interactant intactId="EBI-11525735">
        <id>O95197-3</id>
        <label>RTN3</label>
    </interactant>
    <organismsDiffer>false</organismsDiffer>
    <experiments>3</experiments>
</comment>
<comment type="interaction">
    <interactant intactId="EBI-692836">
        <id>P26678</id>
    </interactant>
    <interactant intactId="EBI-3920694">
        <id>Q9NR31</id>
        <label>SAR1A</label>
    </interactant>
    <organismsDiffer>false</organismsDiffer>
    <experiments>3</experiments>
</comment>
<comment type="interaction">
    <interactant intactId="EBI-692836">
        <id>P26678</id>
    </interactant>
    <interactant intactId="EBI-10204280">
        <id>A0A0S2Z4U3</id>
        <label>SDC3</label>
    </interactant>
    <organismsDiffer>false</organismsDiffer>
    <experiments>3</experiments>
</comment>
<comment type="interaction">
    <interactant intactId="EBI-692836">
        <id>P26678</id>
    </interactant>
    <interactant intactId="EBI-6977215">
        <id>Q9Y3P8</id>
        <label>SIT1</label>
    </interactant>
    <organismsDiffer>false</organismsDiffer>
    <experiments>3</experiments>
</comment>
<comment type="interaction">
    <interactant intactId="EBI-692836">
        <id>P26678</id>
    </interactant>
    <interactant intactId="EBI-1573290">
        <id>Q15849</id>
        <label>SLC14A2</label>
    </interactant>
    <organismsDiffer>false</organismsDiffer>
    <experiments>3</experiments>
</comment>
<comment type="interaction">
    <interactant intactId="EBI-692836">
        <id>P26678</id>
    </interactant>
    <interactant intactId="EBI-10262251">
        <id>Q8IWU4</id>
        <label>SLC30A8</label>
    </interactant>
    <organismsDiffer>false</organismsDiffer>
    <experiments>3</experiments>
</comment>
<comment type="interaction">
    <interactant intactId="EBI-692836">
        <id>P26678</id>
    </interactant>
    <interactant intactId="EBI-12811757">
        <id>O95436-2</id>
        <label>SLC34A2</label>
    </interactant>
    <organismsDiffer>false</organismsDiffer>
    <experiments>3</experiments>
</comment>
<comment type="interaction">
    <interactant intactId="EBI-692836">
        <id>P26678</id>
    </interactant>
    <interactant intactId="EBI-17295964">
        <id>Q9NQQ7-3</id>
        <label>SLC35C2</label>
    </interactant>
    <organismsDiffer>false</organismsDiffer>
    <experiments>3</experiments>
</comment>
<comment type="interaction">
    <interactant intactId="EBI-692836">
        <id>P26678</id>
    </interactant>
    <interactant intactId="EBI-12898013">
        <id>Q9NP94</id>
        <label>SLC39A2</label>
    </interactant>
    <organismsDiffer>false</organismsDiffer>
    <experiments>3</experiments>
</comment>
<comment type="interaction">
    <interactant intactId="EBI-692836">
        <id>P26678</id>
    </interactant>
    <interactant intactId="EBI-17498703">
        <id>Q9HBV2</id>
        <label>SPACA1</label>
    </interactant>
    <organismsDiffer>false</organismsDiffer>
    <experiments>3</experiments>
</comment>
<comment type="interaction">
    <interactant intactId="EBI-692836">
        <id>P26678</id>
    </interactant>
    <interactant intactId="EBI-10819434">
        <id>Q9NPE6</id>
        <label>SPAG4</label>
    </interactant>
    <organismsDiffer>false</organismsDiffer>
    <experiments>3</experiments>
</comment>
<comment type="interaction">
    <interactant intactId="EBI-692836">
        <id>P26678</id>
    </interactant>
    <interactant intactId="EBI-712466">
        <id>Q16623</id>
        <label>STX1A</label>
    </interactant>
    <organismsDiffer>false</organismsDiffer>
    <experiments>3</experiments>
</comment>
<comment type="interaction">
    <interactant intactId="EBI-692836">
        <id>P26678</id>
    </interactant>
    <interactant intactId="EBI-11956649">
        <id>P32856-2</id>
        <label>STX2</label>
    </interactant>
    <organismsDiffer>false</organismsDiffer>
    <experiments>3</experiments>
</comment>
<comment type="interaction">
    <interactant intactId="EBI-692836">
        <id>P26678</id>
    </interactant>
    <interactant intactId="EBI-2821497">
        <id>Q9BVX2</id>
        <label>TMEM106C</label>
    </interactant>
    <organismsDiffer>false</organismsDiffer>
    <experiments>3</experiments>
</comment>
<comment type="interaction">
    <interactant intactId="EBI-692836">
        <id>P26678</id>
    </interactant>
    <interactant intactId="EBI-11724423">
        <id>Q7Z7N9</id>
        <label>TMEM179B</label>
    </interactant>
    <organismsDiffer>false</organismsDiffer>
    <experiments>3</experiments>
</comment>
<comment type="interaction">
    <interactant intactId="EBI-692836">
        <id>P26678</id>
    </interactant>
    <interactant intactId="EBI-6269551">
        <id>Q6UW68</id>
        <label>TMEM205</label>
    </interactant>
    <organismsDiffer>false</organismsDiffer>
    <experiments>3</experiments>
</comment>
<comment type="interaction">
    <interactant intactId="EBI-692836">
        <id>P26678</id>
    </interactant>
    <interactant intactId="EBI-10823938">
        <id>Q9NWC5</id>
        <label>TMEM45A</label>
    </interactant>
    <organismsDiffer>false</organismsDiffer>
    <experiments>3</experiments>
</comment>
<comment type="interaction">
    <interactant intactId="EBI-692836">
        <id>P26678</id>
    </interactant>
    <interactant intactId="EBI-3923061">
        <id>Q96B21</id>
        <label>TMEM45B</label>
    </interactant>
    <organismsDiffer>false</organismsDiffer>
    <experiments>3</experiments>
</comment>
<comment type="interaction">
    <interactant intactId="EBI-692836">
        <id>P26678</id>
    </interactant>
    <interactant intactId="EBI-18178701">
        <id>Q4KMG9</id>
        <label>TMEM52B</label>
    </interactant>
    <organismsDiffer>false</organismsDiffer>
    <experiments>3</experiments>
</comment>
<comment type="interaction">
    <interactant intactId="EBI-692836">
        <id>P26678</id>
    </interactant>
    <interactant intactId="EBI-2548832">
        <id>Q8N661</id>
        <label>TMEM86B</label>
    </interactant>
    <organismsDiffer>false</organismsDiffer>
    <experiments>3</experiments>
</comment>
<comment type="interaction">
    <interactant intactId="EBI-692836">
        <id>P26678</id>
    </interactant>
    <interactant intactId="EBI-12345267">
        <id>O15393-2</id>
        <label>TMPRSS2</label>
    </interactant>
    <organismsDiffer>false</organismsDiffer>
    <experiments>3</experiments>
</comment>
<comment type="subcellular location">
    <subcellularLocation>
        <location evidence="13">Endoplasmic reticulum membrane</location>
        <topology evidence="4">Single-pass membrane protein</topology>
    </subcellularLocation>
    <subcellularLocation>
        <location evidence="7 8 15">Sarcoplasmic reticulum membrane</location>
        <topology evidence="4">Single-pass membrane protein</topology>
    </subcellularLocation>
    <subcellularLocation>
        <location evidence="1">Mitochondrion membrane</location>
        <topology evidence="4">Single-pass membrane protein</topology>
    </subcellularLocation>
    <subcellularLocation>
        <location evidence="3">Membrane</location>
        <topology evidence="4">Single-pass membrane protein</topology>
    </subcellularLocation>
    <text evidence="8 13">Colocalizes with HAX1 at the endoplasmic reticulum (PubMed:17241641). Colocalizes with DMPK at the sarcoplasmic reticulum (PubMed:15598648).</text>
</comment>
<comment type="tissue specificity">
    <text evidence="13">Heart muscle (at protein level).</text>
</comment>
<comment type="PTM">
    <text evidence="8 11 16">Phosphorylation by PKA abolishes the inhibition of ATP2A2-mediated calcium uptake. Phosphorylated at Thr-17 by CaMK2, and in response to beta-adrenergic stimulation. Phosphorylation by DMPK may stimulate sarcoplasmic reticulum calcium uptake in cardiomyocytes.</text>
</comment>
<comment type="PTM">
    <text evidence="3">Palmitoylated by ZDHHC16, promoting formation of the homopentamer.</text>
</comment>
<comment type="PTM">
    <text evidence="3">In elongated spermatids, proteolytically cleaved by SPPL2C which modulates intracellular Ca(2+) homeostasis.</text>
</comment>
<comment type="disease" evidence="5 10 14 15 16">
    <disease id="DI-00222">
        <name>Cardiomyopathy, dilated, 1P</name>
        <acronym>CMD1P</acronym>
        <description>A disorder characterized by ventricular dilation and impaired systolic function, resulting in congestive heart failure and arrhythmia. Patients are at risk of premature death.</description>
        <dbReference type="MIM" id="609909"/>
    </disease>
    <text>The disease is caused by variants affecting the gene represented in this entry.</text>
</comment>
<comment type="disease" evidence="6">
    <disease id="DI-03039">
        <name>Cardiomyopathy, familial hypertrophic, 18</name>
        <acronym>CMH18</acronym>
        <description>A hereditary heart disorder characterized by ventricular hypertrophy, which is usually asymmetric and often involves the interventricular septum. The symptoms include dyspnea, syncope, collapse, palpitations, and chest pain. They can be readily provoked by exercise. The disorder has inter- and intrafamilial variability ranging from benign to malignant forms with high risk of cardiac failure and sudden cardiac death.</description>
        <dbReference type="MIM" id="613874"/>
    </disease>
    <text>The disease is caused by variants affecting the gene represented in this entry.</text>
</comment>
<comment type="miscellaneous">
    <text>For practical reasons, PLN activity is most often studied with ATP2A1 instead of ATP2A2.</text>
</comment>
<comment type="similarity">
    <text evidence="20">Belongs to the phospholamban family.</text>
</comment>
<gene>
    <name evidence="21" type="primary">PLN</name>
    <name type="synonym">PLB</name>
</gene>
<evidence type="ECO:0000250" key="1">
    <source>
        <dbReference type="UniProtKB" id="A4IFH6"/>
    </source>
</evidence>
<evidence type="ECO:0000250" key="2">
    <source>
        <dbReference type="UniProtKB" id="P61012"/>
    </source>
</evidence>
<evidence type="ECO:0000250" key="3">
    <source>
        <dbReference type="UniProtKB" id="P61014"/>
    </source>
</evidence>
<evidence type="ECO:0000255" key="4"/>
<evidence type="ECO:0000269" key="5">
    <source>
    </source>
</evidence>
<evidence type="ECO:0000269" key="6">
    <source>
    </source>
</evidence>
<evidence type="ECO:0000269" key="7">
    <source>
    </source>
</evidence>
<evidence type="ECO:0000269" key="8">
    <source>
    </source>
</evidence>
<evidence type="ECO:0000269" key="9">
    <source>
    </source>
</evidence>
<evidence type="ECO:0000269" key="10">
    <source>
    </source>
</evidence>
<evidence type="ECO:0000269" key="11">
    <source>
    </source>
</evidence>
<evidence type="ECO:0000269" key="12">
    <source>
    </source>
</evidence>
<evidence type="ECO:0000269" key="13">
    <source>
    </source>
</evidence>
<evidence type="ECO:0000269" key="14">
    <source>
    </source>
</evidence>
<evidence type="ECO:0000269" key="15">
    <source>
    </source>
</evidence>
<evidence type="ECO:0000269" key="16">
    <source>
    </source>
</evidence>
<evidence type="ECO:0000269" key="17">
    <source>
    </source>
</evidence>
<evidence type="ECO:0000269" key="18">
    <source>
    </source>
</evidence>
<evidence type="ECO:0000303" key="19">
    <source>
    </source>
</evidence>
<evidence type="ECO:0000305" key="20"/>
<evidence type="ECO:0000312" key="21">
    <source>
        <dbReference type="HGNC" id="HGNC:9080"/>
    </source>
</evidence>
<evidence type="ECO:0007829" key="22">
    <source>
        <dbReference type="PDB" id="1PLP"/>
    </source>
</evidence>
<evidence type="ECO:0007829" key="23">
    <source>
        <dbReference type="PDB" id="1ZLL"/>
    </source>
</evidence>
<protein>
    <recommendedName>
        <fullName evidence="19 21">Phospholamban</fullName>
        <shortName>PLB</shortName>
    </recommendedName>
</protein>